<feature type="signal peptide" evidence="3">
    <location>
        <begin position="1"/>
        <end position="18"/>
    </location>
</feature>
<feature type="chain" id="PRO_0000033505" description="Syndecan-2">
    <location>
        <begin position="19"/>
        <end position="201"/>
    </location>
</feature>
<feature type="topological domain" description="Extracellular" evidence="3">
    <location>
        <begin position="19"/>
        <end position="144"/>
    </location>
</feature>
<feature type="transmembrane region" description="Helical" evidence="3">
    <location>
        <begin position="145"/>
        <end position="169"/>
    </location>
</feature>
<feature type="topological domain" description="Cytoplasmic" evidence="3">
    <location>
        <begin position="170"/>
        <end position="201"/>
    </location>
</feature>
<feature type="region of interest" description="Disordered" evidence="4">
    <location>
        <begin position="42"/>
        <end position="69"/>
    </location>
</feature>
<feature type="region of interest" description="Disordered" evidence="4">
    <location>
        <begin position="88"/>
        <end position="129"/>
    </location>
</feature>
<feature type="region of interest" description="Disordered" evidence="4">
    <location>
        <begin position="178"/>
        <end position="201"/>
    </location>
</feature>
<feature type="compositionally biased region" description="Polar residues" evidence="4">
    <location>
        <begin position="90"/>
        <end position="102"/>
    </location>
</feature>
<feature type="compositionally biased region" description="Basic and acidic residues" evidence="4">
    <location>
        <begin position="106"/>
        <end position="123"/>
    </location>
</feature>
<feature type="site" description="Cleavage of ectodomain" evidence="3">
    <location>
        <begin position="142"/>
        <end position="143"/>
    </location>
</feature>
<feature type="modified residue" description="Phosphoserine" evidence="1">
    <location>
        <position position="115"/>
    </location>
</feature>
<feature type="modified residue" description="Phosphoserine" evidence="1">
    <location>
        <position position="187"/>
    </location>
</feature>
<feature type="glycosylation site" description="O-linked (Xyl...) (glycosaminoglycan) serine" evidence="3">
    <location>
        <position position="41"/>
    </location>
</feature>
<feature type="glycosylation site" description="O-linked (Xyl...) (glycosaminoglycan) serine" evidence="3">
    <location>
        <position position="55"/>
    </location>
</feature>
<feature type="glycosylation site" description="O-linked (Xyl...) (glycosaminoglycan) serine" evidence="3">
    <location>
        <position position="57"/>
    </location>
</feature>
<keyword id="KW-0221">Differentiation</keyword>
<keyword id="KW-0325">Glycoprotein</keyword>
<keyword id="KW-0357">Heparan sulfate</keyword>
<keyword id="KW-0472">Membrane</keyword>
<keyword id="KW-0524">Neurogenesis</keyword>
<keyword id="KW-0597">Phosphoprotein</keyword>
<keyword id="KW-0654">Proteoglycan</keyword>
<keyword id="KW-1185">Reference proteome</keyword>
<keyword id="KW-0732">Signal</keyword>
<keyword id="KW-0812">Transmembrane</keyword>
<keyword id="KW-1133">Transmembrane helix</keyword>
<evidence type="ECO:0000250" key="1">
    <source>
        <dbReference type="UniProtKB" id="P34741"/>
    </source>
</evidence>
<evidence type="ECO:0000250" key="2">
    <source>
        <dbReference type="UniProtKB" id="P43407"/>
    </source>
</evidence>
<evidence type="ECO:0000255" key="3"/>
<evidence type="ECO:0000256" key="4">
    <source>
        <dbReference type="SAM" id="MobiDB-lite"/>
    </source>
</evidence>
<evidence type="ECO:0000305" key="5"/>
<reference key="1">
    <citation type="journal article" date="1992" name="J. Biol. Chem.">
        <title>Molecular cloning of the major cell surface heparan sulfate proteoglycan from rat liver.</title>
        <authorList>
            <person name="Pierce A."/>
            <person name="Lyon M."/>
            <person name="Hampson I."/>
            <person name="Cowling G.J."/>
            <person name="Gallagher J."/>
        </authorList>
    </citation>
    <scope>NUCLEOTIDE SEQUENCE [MRNA]</scope>
    <source>
        <tissue>Liver</tissue>
    </source>
</reference>
<proteinExistence type="evidence at protein level"/>
<gene>
    <name type="primary">Sdc2</name>
    <name type="synonym">Hspg1</name>
    <name type="synonym">Synd2</name>
</gene>
<accession>P34900</accession>
<comment type="function">
    <text evidence="2">Cell surface proteoglycan which regulates dendritic arbor morphogenesis.</text>
</comment>
<comment type="subunit">
    <text evidence="1 2">Interacts (via cytoplasmic domain) with SARM1. Forms a complex with SDCBP and PDCD6IP.</text>
</comment>
<comment type="interaction">
    <interactant intactId="EBI-1173032">
        <id>P34900</id>
    </interactant>
    <interactant intactId="EBI-1173127">
        <id>P26260</id>
        <label>Sdc1</label>
    </interactant>
    <organismsDiffer>false</organismsDiffer>
    <experiments>2</experiments>
</comment>
<comment type="interaction">
    <interactant intactId="EBI-1173032">
        <id>P34900</id>
    </interactant>
    <interactant intactId="EBI-1173032">
        <id>P34900</id>
        <label>Sdc2</label>
    </interactant>
    <organismsDiffer>false</organismsDiffer>
    <experiments>2</experiments>
</comment>
<comment type="interaction">
    <interactant intactId="EBI-1173032">
        <id>P34900</id>
    </interactant>
    <interactant intactId="EBI-1173159">
        <id>P33671</id>
        <label>Sdc3</label>
    </interactant>
    <organismsDiffer>false</organismsDiffer>
    <experiments>2</experiments>
</comment>
<comment type="interaction">
    <interactant intactId="EBI-1173032">
        <id>P34900</id>
    </interactant>
    <interactant intactId="EBI-1173182">
        <id>P34901</id>
        <label>Sdc4</label>
    </interactant>
    <organismsDiffer>false</organismsDiffer>
    <experiments>4</experiments>
</comment>
<comment type="subcellular location">
    <subcellularLocation>
        <location>Membrane</location>
        <topology>Single-pass type I membrane protein</topology>
    </subcellularLocation>
</comment>
<comment type="PTM">
    <text evidence="2">O-glycosylated; contains both heparan sulfate and chondroitin sulfate.</text>
</comment>
<comment type="similarity">
    <text evidence="5">Belongs to the syndecan proteoglycan family.</text>
</comment>
<protein>
    <recommendedName>
        <fullName>Syndecan-2</fullName>
        <shortName>SYND2</shortName>
    </recommendedName>
    <alternativeName>
        <fullName>Fibroglycan</fullName>
    </alternativeName>
    <alternativeName>
        <fullName>Heparan sulfate proteoglycan core protein</fullName>
        <shortName>HSPG</shortName>
    </alternativeName>
    <cdAntigenName>CD362</cdAntigenName>
</protein>
<name>SDC2_RAT</name>
<sequence length="201" mass="22149">MQRAWILLTLGLMACVSAETRAELTSDKDMYLDSSSIEEASGLYPIDDDDYSSASGSGAYEDKGSPDLTTSQLIPRISLTSAAPEVETMTLKTQSITPTQTESPEETDKKEFEISEAEEKQDPAVKSTDVYTEKHSDNLFKRTEVLAAVIAGGVIGFLFAIFLILLLVYRMRKKDEGSYDLGERKPSSAAYQKAPTKEFYA</sequence>
<dbReference type="EMBL" id="M81687">
    <property type="protein sequence ID" value="AAA41355.1"/>
    <property type="molecule type" value="mRNA"/>
</dbReference>
<dbReference type="PIR" id="A42261">
    <property type="entry name" value="A42261"/>
</dbReference>
<dbReference type="RefSeq" id="NP_037214.1">
    <property type="nucleotide sequence ID" value="NM_013082.3"/>
</dbReference>
<dbReference type="SMR" id="P34900"/>
<dbReference type="BioGRID" id="247644">
    <property type="interactions" value="5"/>
</dbReference>
<dbReference type="CORUM" id="P34900"/>
<dbReference type="FunCoup" id="P34900">
    <property type="interactions" value="1169"/>
</dbReference>
<dbReference type="IntAct" id="P34900">
    <property type="interactions" value="5"/>
</dbReference>
<dbReference type="STRING" id="10116.ENSRNOP00000007255"/>
<dbReference type="GlyCosmos" id="P34900">
    <property type="glycosylation" value="3 sites, No reported glycans"/>
</dbReference>
<dbReference type="GlyGen" id="P34900">
    <property type="glycosylation" value="3 sites"/>
</dbReference>
<dbReference type="iPTMnet" id="P34900"/>
<dbReference type="PhosphoSitePlus" id="P34900"/>
<dbReference type="PaxDb" id="10116-ENSRNOP00000007255"/>
<dbReference type="GeneID" id="25615"/>
<dbReference type="KEGG" id="rno:25615"/>
<dbReference type="UCSC" id="RGD:3649">
    <property type="organism name" value="rat"/>
</dbReference>
<dbReference type="AGR" id="RGD:3649"/>
<dbReference type="CTD" id="6383"/>
<dbReference type="RGD" id="3649">
    <property type="gene designation" value="Sdc2"/>
</dbReference>
<dbReference type="eggNOG" id="ENOG502S3JC">
    <property type="taxonomic scope" value="Eukaryota"/>
</dbReference>
<dbReference type="InParanoid" id="P34900"/>
<dbReference type="OrthoDB" id="77037at9989"/>
<dbReference type="Reactome" id="R-RNO-1971475">
    <property type="pathway name" value="A tetrasaccharide linker sequence is required for GAG synthesis"/>
</dbReference>
<dbReference type="Reactome" id="R-RNO-2022928">
    <property type="pathway name" value="HS-GAG biosynthesis"/>
</dbReference>
<dbReference type="Reactome" id="R-RNO-2024096">
    <property type="pathway name" value="HS-GAG degradation"/>
</dbReference>
<dbReference type="Reactome" id="R-RNO-202733">
    <property type="pathway name" value="Cell surface interactions at the vascular wall"/>
</dbReference>
<dbReference type="Reactome" id="R-RNO-3000170">
    <property type="pathway name" value="Syndecan interactions"/>
</dbReference>
<dbReference type="Reactome" id="R-RNO-381426">
    <property type="pathway name" value="Regulation of Insulin-like Growth Factor (IGF) transport and uptake by Insulin-like Growth Factor Binding Proteins (IGFBPs)"/>
</dbReference>
<dbReference type="Reactome" id="R-RNO-3928662">
    <property type="pathway name" value="EPHB-mediated forward signaling"/>
</dbReference>
<dbReference type="Reactome" id="R-RNO-8957275">
    <property type="pathway name" value="Post-translational protein phosphorylation"/>
</dbReference>
<dbReference type="Reactome" id="R-RNO-975634">
    <property type="pathway name" value="Retinoid metabolism and transport"/>
</dbReference>
<dbReference type="PRO" id="PR:P34900"/>
<dbReference type="Proteomes" id="UP000002494">
    <property type="component" value="Unplaced"/>
</dbReference>
<dbReference type="GO" id="GO:0009986">
    <property type="term" value="C:cell surface"/>
    <property type="evidence" value="ECO:0000318"/>
    <property type="project" value="GO_Central"/>
</dbReference>
<dbReference type="GO" id="GO:0098978">
    <property type="term" value="C:glutamatergic synapse"/>
    <property type="evidence" value="ECO:0000314"/>
    <property type="project" value="SynGO"/>
</dbReference>
<dbReference type="GO" id="GO:0043025">
    <property type="term" value="C:neuronal cell body"/>
    <property type="evidence" value="ECO:0000314"/>
    <property type="project" value="RGD"/>
</dbReference>
<dbReference type="GO" id="GO:0005886">
    <property type="term" value="C:plasma membrane"/>
    <property type="evidence" value="ECO:0000304"/>
    <property type="project" value="Reactome"/>
</dbReference>
<dbReference type="GO" id="GO:0045211">
    <property type="term" value="C:postsynaptic membrane"/>
    <property type="evidence" value="ECO:0000314"/>
    <property type="project" value="SynGO"/>
</dbReference>
<dbReference type="GO" id="GO:0042734">
    <property type="term" value="C:presynaptic membrane"/>
    <property type="evidence" value="ECO:0000314"/>
    <property type="project" value="SynGO"/>
</dbReference>
<dbReference type="GO" id="GO:0042802">
    <property type="term" value="F:identical protein binding"/>
    <property type="evidence" value="ECO:0000353"/>
    <property type="project" value="IntAct"/>
</dbReference>
<dbReference type="GO" id="GO:0030165">
    <property type="term" value="F:PDZ domain binding"/>
    <property type="evidence" value="ECO:0000353"/>
    <property type="project" value="RGD"/>
</dbReference>
<dbReference type="GO" id="GO:0016477">
    <property type="term" value="P:cell migration"/>
    <property type="evidence" value="ECO:0000318"/>
    <property type="project" value="GO_Central"/>
</dbReference>
<dbReference type="GO" id="GO:0048813">
    <property type="term" value="P:dendrite morphogenesis"/>
    <property type="evidence" value="ECO:0000270"/>
    <property type="project" value="RGD"/>
</dbReference>
<dbReference type="GO" id="GO:0045785">
    <property type="term" value="P:positive regulation of cell adhesion"/>
    <property type="evidence" value="ECO:0000315"/>
    <property type="project" value="RGD"/>
</dbReference>
<dbReference type="GO" id="GO:0010634">
    <property type="term" value="P:positive regulation of epithelial cell migration"/>
    <property type="evidence" value="ECO:0000315"/>
    <property type="project" value="RGD"/>
</dbReference>
<dbReference type="GO" id="GO:0048814">
    <property type="term" value="P:regulation of dendrite morphogenesis"/>
    <property type="evidence" value="ECO:0000250"/>
    <property type="project" value="UniProtKB"/>
</dbReference>
<dbReference type="GO" id="GO:0051963">
    <property type="term" value="P:regulation of synapse assembly"/>
    <property type="evidence" value="ECO:0000314"/>
    <property type="project" value="SynGO"/>
</dbReference>
<dbReference type="GO" id="GO:0090128">
    <property type="term" value="P:regulation of synapse maturation"/>
    <property type="evidence" value="ECO:0000314"/>
    <property type="project" value="SynGO"/>
</dbReference>
<dbReference type="GO" id="GO:0031000">
    <property type="term" value="P:response to caffeine"/>
    <property type="evidence" value="ECO:0000270"/>
    <property type="project" value="RGD"/>
</dbReference>
<dbReference type="GO" id="GO:0001666">
    <property type="term" value="P:response to hypoxia"/>
    <property type="evidence" value="ECO:0000270"/>
    <property type="project" value="RGD"/>
</dbReference>
<dbReference type="InterPro" id="IPR003585">
    <property type="entry name" value="Neurexin-like"/>
</dbReference>
<dbReference type="InterPro" id="IPR001050">
    <property type="entry name" value="Syndecan"/>
</dbReference>
<dbReference type="InterPro" id="IPR027789">
    <property type="entry name" value="Syndecan/Neurexin_dom"/>
</dbReference>
<dbReference type="InterPro" id="IPR030479">
    <property type="entry name" value="Syndecan_CS"/>
</dbReference>
<dbReference type="PANTHER" id="PTHR10915">
    <property type="entry name" value="SYNDECAN"/>
    <property type="match status" value="1"/>
</dbReference>
<dbReference type="PANTHER" id="PTHR10915:SF6">
    <property type="entry name" value="SYNDECAN-2"/>
    <property type="match status" value="1"/>
</dbReference>
<dbReference type="Pfam" id="PF01034">
    <property type="entry name" value="Syndecan"/>
    <property type="match status" value="1"/>
</dbReference>
<dbReference type="SMART" id="SM00294">
    <property type="entry name" value="4.1m"/>
    <property type="match status" value="1"/>
</dbReference>
<dbReference type="PROSITE" id="PS00964">
    <property type="entry name" value="SYNDECAN"/>
    <property type="match status" value="1"/>
</dbReference>
<organism>
    <name type="scientific">Rattus norvegicus</name>
    <name type="common">Rat</name>
    <dbReference type="NCBI Taxonomy" id="10116"/>
    <lineage>
        <taxon>Eukaryota</taxon>
        <taxon>Metazoa</taxon>
        <taxon>Chordata</taxon>
        <taxon>Craniata</taxon>
        <taxon>Vertebrata</taxon>
        <taxon>Euteleostomi</taxon>
        <taxon>Mammalia</taxon>
        <taxon>Eutheria</taxon>
        <taxon>Euarchontoglires</taxon>
        <taxon>Glires</taxon>
        <taxon>Rodentia</taxon>
        <taxon>Myomorpha</taxon>
        <taxon>Muroidea</taxon>
        <taxon>Muridae</taxon>
        <taxon>Murinae</taxon>
        <taxon>Rattus</taxon>
    </lineage>
</organism>